<gene>
    <name evidence="1" type="primary">ppaC</name>
    <name type="synonym">ppa</name>
    <name type="ordered locus">SAG1397</name>
</gene>
<comment type="catalytic activity">
    <reaction evidence="1">
        <text>diphosphate + H2O = 2 phosphate + H(+)</text>
        <dbReference type="Rhea" id="RHEA:24576"/>
        <dbReference type="ChEBI" id="CHEBI:15377"/>
        <dbReference type="ChEBI" id="CHEBI:15378"/>
        <dbReference type="ChEBI" id="CHEBI:33019"/>
        <dbReference type="ChEBI" id="CHEBI:43474"/>
        <dbReference type="EC" id="3.6.1.1"/>
    </reaction>
</comment>
<comment type="cofactor">
    <cofactor evidence="1">
        <name>Mn(2+)</name>
        <dbReference type="ChEBI" id="CHEBI:29035"/>
    </cofactor>
    <text evidence="1">Binds 2 manganese ions per subunit.</text>
</comment>
<comment type="subcellular location">
    <subcellularLocation>
        <location evidence="1">Cytoplasm</location>
    </subcellularLocation>
</comment>
<comment type="PTM">
    <text evidence="2">Phosphorylated on serine residue(s) by stk1. Dephosphorylated by stp1.</text>
</comment>
<comment type="similarity">
    <text evidence="1">Belongs to the PPase class C family.</text>
</comment>
<dbReference type="EC" id="3.6.1.1" evidence="1"/>
<dbReference type="EMBL" id="AE009948">
    <property type="protein sequence ID" value="AAN00268.1"/>
    <property type="molecule type" value="Genomic_DNA"/>
</dbReference>
<dbReference type="RefSeq" id="NP_688395.1">
    <property type="nucleotide sequence ID" value="NC_004116.1"/>
</dbReference>
<dbReference type="RefSeq" id="WP_000036019.1">
    <property type="nucleotide sequence ID" value="NC_004116.1"/>
</dbReference>
<dbReference type="PDB" id="2ENX">
    <property type="method" value="X-ray"/>
    <property type="resolution" value="2.80 A"/>
    <property type="chains" value="A/B=2-311"/>
</dbReference>
<dbReference type="PDBsum" id="2ENX"/>
<dbReference type="SMR" id="Q8DYS6"/>
<dbReference type="STRING" id="208435.SAG1397"/>
<dbReference type="KEGG" id="sag:SAG1397"/>
<dbReference type="PATRIC" id="fig|208435.3.peg.1405"/>
<dbReference type="HOGENOM" id="CLU_025243_0_1_9"/>
<dbReference type="OrthoDB" id="9766150at2"/>
<dbReference type="BRENDA" id="3.6.1.1">
    <property type="organism ID" value="5917"/>
</dbReference>
<dbReference type="Proteomes" id="UP000000821">
    <property type="component" value="Chromosome"/>
</dbReference>
<dbReference type="GO" id="GO:0005737">
    <property type="term" value="C:cytoplasm"/>
    <property type="evidence" value="ECO:0007669"/>
    <property type="project" value="UniProtKB-SubCell"/>
</dbReference>
<dbReference type="GO" id="GO:0004427">
    <property type="term" value="F:inorganic diphosphate phosphatase activity"/>
    <property type="evidence" value="ECO:0007669"/>
    <property type="project" value="UniProtKB-UniRule"/>
</dbReference>
<dbReference type="GO" id="GO:0030145">
    <property type="term" value="F:manganese ion binding"/>
    <property type="evidence" value="ECO:0007669"/>
    <property type="project" value="UniProtKB-UniRule"/>
</dbReference>
<dbReference type="FunFam" id="3.10.310.20:FF:000001">
    <property type="entry name" value="Probable manganese-dependent inorganic pyrophosphatase"/>
    <property type="match status" value="1"/>
</dbReference>
<dbReference type="FunFam" id="3.90.1640.10:FF:000001">
    <property type="entry name" value="Probable manganese-dependent inorganic pyrophosphatase"/>
    <property type="match status" value="1"/>
</dbReference>
<dbReference type="Gene3D" id="3.10.310.20">
    <property type="entry name" value="DHHA2 domain"/>
    <property type="match status" value="1"/>
</dbReference>
<dbReference type="Gene3D" id="3.90.1640.10">
    <property type="entry name" value="inorganic pyrophosphatase (n-terminal core)"/>
    <property type="match status" value="1"/>
</dbReference>
<dbReference type="HAMAP" id="MF_00207">
    <property type="entry name" value="PPase_C"/>
    <property type="match status" value="1"/>
</dbReference>
<dbReference type="InterPro" id="IPR001667">
    <property type="entry name" value="DDH_dom"/>
</dbReference>
<dbReference type="InterPro" id="IPR038763">
    <property type="entry name" value="DHH_sf"/>
</dbReference>
<dbReference type="InterPro" id="IPR004097">
    <property type="entry name" value="DHHA2"/>
</dbReference>
<dbReference type="InterPro" id="IPR038222">
    <property type="entry name" value="DHHA2_dom_sf"/>
</dbReference>
<dbReference type="InterPro" id="IPR022934">
    <property type="entry name" value="Mn-dep_inorganic_PyrPase"/>
</dbReference>
<dbReference type="InterPro" id="IPR051319">
    <property type="entry name" value="Oligoribo/pAp-PDE_c-di-AMP_PDE"/>
</dbReference>
<dbReference type="NCBIfam" id="NF003877">
    <property type="entry name" value="PRK05427.1"/>
    <property type="match status" value="1"/>
</dbReference>
<dbReference type="PANTHER" id="PTHR47618">
    <property type="entry name" value="BIFUNCTIONAL OLIGORIBONUCLEASE AND PAP PHOSPHATASE NRNA"/>
    <property type="match status" value="1"/>
</dbReference>
<dbReference type="PANTHER" id="PTHR47618:SF1">
    <property type="entry name" value="BIFUNCTIONAL OLIGORIBONUCLEASE AND PAP PHOSPHATASE NRNA"/>
    <property type="match status" value="1"/>
</dbReference>
<dbReference type="Pfam" id="PF01368">
    <property type="entry name" value="DHH"/>
    <property type="match status" value="1"/>
</dbReference>
<dbReference type="Pfam" id="PF02833">
    <property type="entry name" value="DHHA2"/>
    <property type="match status" value="1"/>
</dbReference>
<dbReference type="SMART" id="SM01131">
    <property type="entry name" value="DHHA2"/>
    <property type="match status" value="1"/>
</dbReference>
<dbReference type="SUPFAM" id="SSF64182">
    <property type="entry name" value="DHH phosphoesterases"/>
    <property type="match status" value="1"/>
</dbReference>
<feature type="chain" id="PRO_0000158588" description="Probable manganese-dependent inorganic pyrophosphatase">
    <location>
        <begin position="1"/>
        <end position="311"/>
    </location>
</feature>
<feature type="binding site" evidence="1">
    <location>
        <position position="9"/>
    </location>
    <ligand>
        <name>Mn(2+)</name>
        <dbReference type="ChEBI" id="CHEBI:29035"/>
        <label>1</label>
    </ligand>
</feature>
<feature type="binding site" evidence="1">
    <location>
        <position position="13"/>
    </location>
    <ligand>
        <name>Mn(2+)</name>
        <dbReference type="ChEBI" id="CHEBI:29035"/>
        <label>1</label>
    </ligand>
</feature>
<feature type="binding site" evidence="1">
    <location>
        <position position="15"/>
    </location>
    <ligand>
        <name>Mn(2+)</name>
        <dbReference type="ChEBI" id="CHEBI:29035"/>
        <label>2</label>
    </ligand>
</feature>
<feature type="binding site" evidence="1">
    <location>
        <position position="77"/>
    </location>
    <ligand>
        <name>Mn(2+)</name>
        <dbReference type="ChEBI" id="CHEBI:29035"/>
        <label>1</label>
    </ligand>
</feature>
<feature type="binding site" evidence="1">
    <location>
        <position position="77"/>
    </location>
    <ligand>
        <name>Mn(2+)</name>
        <dbReference type="ChEBI" id="CHEBI:29035"/>
        <label>2</label>
    </ligand>
</feature>
<feature type="binding site" evidence="1">
    <location>
        <position position="99"/>
    </location>
    <ligand>
        <name>Mn(2+)</name>
        <dbReference type="ChEBI" id="CHEBI:29035"/>
        <label>2</label>
    </ligand>
</feature>
<feature type="binding site" evidence="1">
    <location>
        <position position="151"/>
    </location>
    <ligand>
        <name>Mn(2+)</name>
        <dbReference type="ChEBI" id="CHEBI:29035"/>
        <label>2</label>
    </ligand>
</feature>
<reference key="1">
    <citation type="journal article" date="2002" name="Proc. Natl. Acad. Sci. U.S.A.">
        <title>Complete genome sequence and comparative genomic analysis of an emerging human pathogen, serotype V Streptococcus agalactiae.</title>
        <authorList>
            <person name="Tettelin H."/>
            <person name="Masignani V."/>
            <person name="Cieslewicz M.J."/>
            <person name="Eisen J.A."/>
            <person name="Peterson S.N."/>
            <person name="Wessels M.R."/>
            <person name="Paulsen I.T."/>
            <person name="Nelson K.E."/>
            <person name="Margarit I."/>
            <person name="Read T.D."/>
            <person name="Madoff L.C."/>
            <person name="Wolf A.M."/>
            <person name="Beanan M.J."/>
            <person name="Brinkac L.M."/>
            <person name="Daugherty S.C."/>
            <person name="DeBoy R.T."/>
            <person name="Durkin A.S."/>
            <person name="Kolonay J.F."/>
            <person name="Madupu R."/>
            <person name="Lewis M.R."/>
            <person name="Radune D."/>
            <person name="Fedorova N.B."/>
            <person name="Scanlan D."/>
            <person name="Khouri H.M."/>
            <person name="Mulligan S."/>
            <person name="Carty H.A."/>
            <person name="Cline R.T."/>
            <person name="Van Aken S.E."/>
            <person name="Gill J."/>
            <person name="Scarselli M."/>
            <person name="Mora M."/>
            <person name="Iacobini E.T."/>
            <person name="Brettoni C."/>
            <person name="Galli G."/>
            <person name="Mariani M."/>
            <person name="Vegni F."/>
            <person name="Maione D."/>
            <person name="Rinaudo D."/>
            <person name="Rappuoli R."/>
            <person name="Telford J.L."/>
            <person name="Kasper D.L."/>
            <person name="Grandi G."/>
            <person name="Fraser C.M."/>
        </authorList>
    </citation>
    <scope>NUCLEOTIDE SEQUENCE [LARGE SCALE GENOMIC DNA]</scope>
    <source>
        <strain>ATCC BAA-611 / 2603 V/R</strain>
    </source>
</reference>
<reference key="2">
    <citation type="journal article" date="2003" name="J. Biol. Chem.">
        <title>A eukaryotic type serine/threonine kinase and phosphatase in Streptococcus agalactiae reversibly phosphorylate an inorganic pyrophosphatase and affect growth, cell segregation, and virulence.</title>
        <authorList>
            <person name="Rajagopal L."/>
            <person name="Clancy A."/>
            <person name="Rubens C.E."/>
        </authorList>
    </citation>
    <scope>PHOSPHORYLATION</scope>
</reference>
<accession>Q8DYS6</accession>
<name>PPAC_STRA5</name>
<proteinExistence type="evidence at protein level"/>
<sequence>MSKILVFGHQNPDSDAIGSSVAFAYLAKEAWGLDTEAVALGTPNEETAYVLDYFGVQAPRVVESAKAEGVETVILTDHNEFQQSISDIKDVTVYGVVDHHRVANFETANPLYMRLEPVGSASSIVYRMFKENGVSVPKELAGLLLSGLISDTLLLKSPTTHASDIPVAKELAELAGVNLEEYGLEMLKAGTNLSSKTAAELIDIDAKTFELNGEAVRVAQVNTVDINDILARQEEIEVAIQEAIVTEGYSDFVLMITDIVNSNSEILALGSNMAKVEAAFEFTLENNHAFLAGAVSRKKQVVPQLTESYNA</sequence>
<evidence type="ECO:0000255" key="1">
    <source>
        <dbReference type="HAMAP-Rule" id="MF_00207"/>
    </source>
</evidence>
<evidence type="ECO:0000269" key="2">
    <source>
    </source>
</evidence>
<keyword id="KW-0002">3D-structure</keyword>
<keyword id="KW-0963">Cytoplasm</keyword>
<keyword id="KW-0378">Hydrolase</keyword>
<keyword id="KW-0464">Manganese</keyword>
<keyword id="KW-0479">Metal-binding</keyword>
<keyword id="KW-0597">Phosphoprotein</keyword>
<keyword id="KW-1185">Reference proteome</keyword>
<protein>
    <recommendedName>
        <fullName evidence="1">Probable manganese-dependent inorganic pyrophosphatase</fullName>
        <ecNumber evidence="1">3.6.1.1</ecNumber>
    </recommendedName>
    <alternativeName>
        <fullName evidence="1">Pyrophosphate phospho-hydrolase</fullName>
        <shortName evidence="1">PPase</shortName>
    </alternativeName>
</protein>
<organism>
    <name type="scientific">Streptococcus agalactiae serotype V (strain ATCC BAA-611 / 2603 V/R)</name>
    <dbReference type="NCBI Taxonomy" id="208435"/>
    <lineage>
        <taxon>Bacteria</taxon>
        <taxon>Bacillati</taxon>
        <taxon>Bacillota</taxon>
        <taxon>Bacilli</taxon>
        <taxon>Lactobacillales</taxon>
        <taxon>Streptococcaceae</taxon>
        <taxon>Streptococcus</taxon>
    </lineage>
</organism>